<keyword id="KW-0997">Cell inner membrane</keyword>
<keyword id="KW-1003">Cell membrane</keyword>
<keyword id="KW-0472">Membrane</keyword>
<keyword id="KW-0812">Transmembrane</keyword>
<keyword id="KW-1133">Transmembrane helix</keyword>
<keyword id="KW-0813">Transport</keyword>
<comment type="function">
    <text evidence="1">Part of the ABC transporter complex BtuCDF involved in vitamin B12 import. Involved in the translocation of the substrate across the membrane.</text>
</comment>
<comment type="subunit">
    <text evidence="1">The complex is composed of two ATP-binding proteins (BtuD), two transmembrane proteins (BtuC) and a solute-binding protein (BtuF).</text>
</comment>
<comment type="subcellular location">
    <subcellularLocation>
        <location evidence="1">Cell inner membrane</location>
        <topology evidence="1">Multi-pass membrane protein</topology>
    </subcellularLocation>
</comment>
<comment type="similarity">
    <text evidence="1">Belongs to the binding-protein-dependent transport system permease family. FecCD subfamily.</text>
</comment>
<sequence>MLTLARQQQRQNIRWLLCLSVLMLLALLLSLCAGELWILPGDWFSPRGELFVWQIRLPRTLAVLLVGAALAISGAVMQALFENPLAEPGLLGVSNGAGVGLIAAVLLGQGQLPNWALGLCAIAGALIITLILLRFARRHLSTSRLLLAGVALGIICSALMTWAIYFSTSVDLRQLMYWMMGGFGGVDWRQSWLMLALIPVLLWICCQSRPMNMLALGEISARQLGLPLWFWRNVLVAATGWMVGVSVALAGAIGFIGLVIPHILRLCGLTDHRVLLPGCALAGASALLLADIVARLALAAAELPIGVVTATLGAPVFIWLLLKAGR</sequence>
<gene>
    <name evidence="1" type="primary">btuC</name>
    <name type="ordered locus">ECP_1659</name>
</gene>
<dbReference type="EMBL" id="CP000247">
    <property type="protein sequence ID" value="ABG69662.1"/>
    <property type="molecule type" value="Genomic_DNA"/>
</dbReference>
<dbReference type="RefSeq" id="WP_000956502.1">
    <property type="nucleotide sequence ID" value="NC_008253.1"/>
</dbReference>
<dbReference type="SMR" id="Q0THB7"/>
<dbReference type="KEGG" id="ecp:ECP_1659"/>
<dbReference type="HOGENOM" id="CLU_013016_0_3_6"/>
<dbReference type="Proteomes" id="UP000009182">
    <property type="component" value="Chromosome"/>
</dbReference>
<dbReference type="GO" id="GO:0005886">
    <property type="term" value="C:plasma membrane"/>
    <property type="evidence" value="ECO:0007669"/>
    <property type="project" value="UniProtKB-SubCell"/>
</dbReference>
<dbReference type="GO" id="GO:0090482">
    <property type="term" value="F:vitamin transmembrane transporter activity"/>
    <property type="evidence" value="ECO:0007669"/>
    <property type="project" value="UniProtKB-UniRule"/>
</dbReference>
<dbReference type="GO" id="GO:0015889">
    <property type="term" value="P:cobalamin transport"/>
    <property type="evidence" value="ECO:0007669"/>
    <property type="project" value="UniProtKB-UniRule"/>
</dbReference>
<dbReference type="CDD" id="cd06550">
    <property type="entry name" value="TM_ABC_iron-siderophores_like"/>
    <property type="match status" value="1"/>
</dbReference>
<dbReference type="FunFam" id="1.10.3470.10:FF:000001">
    <property type="entry name" value="Vitamin B12 ABC transporter permease BtuC"/>
    <property type="match status" value="1"/>
</dbReference>
<dbReference type="Gene3D" id="1.10.3470.10">
    <property type="entry name" value="ABC transporter involved in vitamin B12 uptake, BtuC"/>
    <property type="match status" value="1"/>
</dbReference>
<dbReference type="HAMAP" id="MF_01004">
    <property type="entry name" value="BtuC"/>
    <property type="match status" value="1"/>
</dbReference>
<dbReference type="InterPro" id="IPR037294">
    <property type="entry name" value="ABC_BtuC-like"/>
</dbReference>
<dbReference type="InterPro" id="IPR023691">
    <property type="entry name" value="ABC_transptr_BtuC"/>
</dbReference>
<dbReference type="InterPro" id="IPR000522">
    <property type="entry name" value="ABC_transptr_permease_BtuC"/>
</dbReference>
<dbReference type="NCBIfam" id="NF003001">
    <property type="entry name" value="PRK03784.1"/>
    <property type="match status" value="1"/>
</dbReference>
<dbReference type="PANTHER" id="PTHR30472">
    <property type="entry name" value="FERRIC ENTEROBACTIN TRANSPORT SYSTEM PERMEASE PROTEIN"/>
    <property type="match status" value="1"/>
</dbReference>
<dbReference type="PANTHER" id="PTHR30472:SF29">
    <property type="entry name" value="VITAMIN B12 IMPORT SYSTEM PERMEASE PROTEIN BTUC"/>
    <property type="match status" value="1"/>
</dbReference>
<dbReference type="Pfam" id="PF01032">
    <property type="entry name" value="FecCD"/>
    <property type="match status" value="1"/>
</dbReference>
<dbReference type="SUPFAM" id="SSF81345">
    <property type="entry name" value="ABC transporter involved in vitamin B12 uptake, BtuC"/>
    <property type="match status" value="1"/>
</dbReference>
<feature type="chain" id="PRO_1000062774" description="Vitamin B12 import system permease protein BtuC">
    <location>
        <begin position="1"/>
        <end position="326"/>
    </location>
</feature>
<feature type="transmembrane region" description="Helical" evidence="1">
    <location>
        <begin position="19"/>
        <end position="39"/>
    </location>
</feature>
<feature type="transmembrane region" description="Helical" evidence="1">
    <location>
        <begin position="61"/>
        <end position="81"/>
    </location>
</feature>
<feature type="transmembrane region" description="Helical" evidence="1">
    <location>
        <begin position="88"/>
        <end position="108"/>
    </location>
</feature>
<feature type="transmembrane region" description="Helical" evidence="1">
    <location>
        <begin position="112"/>
        <end position="132"/>
    </location>
</feature>
<feature type="transmembrane region" description="Helical" evidence="1">
    <location>
        <begin position="146"/>
        <end position="166"/>
    </location>
</feature>
<feature type="transmembrane region" description="Helical" evidence="1">
    <location>
        <begin position="184"/>
        <end position="204"/>
    </location>
</feature>
<feature type="transmembrane region" description="Helical" evidence="1">
    <location>
        <begin position="240"/>
        <end position="260"/>
    </location>
</feature>
<feature type="transmembrane region" description="Helical" evidence="1">
    <location>
        <begin position="274"/>
        <end position="294"/>
    </location>
</feature>
<feature type="transmembrane region" description="Helical" evidence="1">
    <location>
        <begin position="302"/>
        <end position="322"/>
    </location>
</feature>
<protein>
    <recommendedName>
        <fullName evidence="1">Vitamin B12 import system permease protein BtuC</fullName>
    </recommendedName>
</protein>
<proteinExistence type="inferred from homology"/>
<evidence type="ECO:0000255" key="1">
    <source>
        <dbReference type="HAMAP-Rule" id="MF_01004"/>
    </source>
</evidence>
<accession>Q0THB7</accession>
<reference key="1">
    <citation type="journal article" date="2006" name="Mol. Microbiol.">
        <title>Role of pathogenicity island-associated integrases in the genome plasticity of uropathogenic Escherichia coli strain 536.</title>
        <authorList>
            <person name="Hochhut B."/>
            <person name="Wilde C."/>
            <person name="Balling G."/>
            <person name="Middendorf B."/>
            <person name="Dobrindt U."/>
            <person name="Brzuszkiewicz E."/>
            <person name="Gottschalk G."/>
            <person name="Carniel E."/>
            <person name="Hacker J."/>
        </authorList>
    </citation>
    <scope>NUCLEOTIDE SEQUENCE [LARGE SCALE GENOMIC DNA]</scope>
    <source>
        <strain>536 / UPEC</strain>
    </source>
</reference>
<name>BTUC_ECOL5</name>
<organism>
    <name type="scientific">Escherichia coli O6:K15:H31 (strain 536 / UPEC)</name>
    <dbReference type="NCBI Taxonomy" id="362663"/>
    <lineage>
        <taxon>Bacteria</taxon>
        <taxon>Pseudomonadati</taxon>
        <taxon>Pseudomonadota</taxon>
        <taxon>Gammaproteobacteria</taxon>
        <taxon>Enterobacterales</taxon>
        <taxon>Enterobacteriaceae</taxon>
        <taxon>Escherichia</taxon>
    </lineage>
</organism>